<keyword id="KW-0281">Fimbrium</keyword>
<keyword id="KW-1185">Reference proteome</keyword>
<keyword id="KW-0964">Secreted</keyword>
<reference key="1">
    <citation type="journal article" date="1996" name="Science">
        <title>Complete genome sequence of the methanogenic archaeon, Methanococcus jannaschii.</title>
        <authorList>
            <person name="Bult C.J."/>
            <person name="White O."/>
            <person name="Olsen G.J."/>
            <person name="Zhou L."/>
            <person name="Fleischmann R.D."/>
            <person name="Sutton G.G."/>
            <person name="Blake J.A."/>
            <person name="FitzGerald L.M."/>
            <person name="Clayton R.A."/>
            <person name="Gocayne J.D."/>
            <person name="Kerlavage A.R."/>
            <person name="Dougherty B.A."/>
            <person name="Tomb J.-F."/>
            <person name="Adams M.D."/>
            <person name="Reich C.I."/>
            <person name="Overbeek R."/>
            <person name="Kirkness E.F."/>
            <person name="Weinstock K.G."/>
            <person name="Merrick J.M."/>
            <person name="Glodek A."/>
            <person name="Scott J.L."/>
            <person name="Geoghagen N.S.M."/>
            <person name="Weidman J.F."/>
            <person name="Fuhrmann J.L."/>
            <person name="Nguyen D."/>
            <person name="Utterback T.R."/>
            <person name="Kelley J.M."/>
            <person name="Peterson J.D."/>
            <person name="Sadow P.W."/>
            <person name="Hanna M.C."/>
            <person name="Cotton M.D."/>
            <person name="Roberts K.M."/>
            <person name="Hurst M.A."/>
            <person name="Kaine B.P."/>
            <person name="Borodovsky M."/>
            <person name="Klenk H.-P."/>
            <person name="Fraser C.M."/>
            <person name="Smith H.O."/>
            <person name="Woese C.R."/>
            <person name="Venter J.C."/>
        </authorList>
    </citation>
    <scope>NUCLEOTIDE SEQUENCE [LARGE SCALE GENOMIC DNA]</scope>
    <source>
        <strain>ATCC 43067 / DSM 2661 / JAL-1 / JCM 10045 / NBRC 100440</strain>
    </source>
</reference>
<evidence type="ECO:0000250" key="1">
    <source>
        <dbReference type="UniProtKB" id="Q6LWM4"/>
    </source>
</evidence>
<evidence type="ECO:0000250" key="2">
    <source>
        <dbReference type="UniProtKB" id="Q6M0N7"/>
    </source>
</evidence>
<evidence type="ECO:0000305" key="3"/>
<accession>Q58864</accession>
<name>Y1469_METJA</name>
<proteinExistence type="inferred from homology"/>
<dbReference type="EMBL" id="L77117">
    <property type="protein sequence ID" value="AAB99484.1"/>
    <property type="molecule type" value="Genomic_DNA"/>
</dbReference>
<dbReference type="PIR" id="D64483">
    <property type="entry name" value="D64483"/>
</dbReference>
<dbReference type="RefSeq" id="WP_010870989.1">
    <property type="nucleotide sequence ID" value="NC_000909.1"/>
</dbReference>
<dbReference type="SMR" id="Q58864"/>
<dbReference type="STRING" id="243232.MJ_1469"/>
<dbReference type="PaxDb" id="243232-MJ_1469"/>
<dbReference type="EnsemblBacteria" id="AAB99484">
    <property type="protein sequence ID" value="AAB99484"/>
    <property type="gene ID" value="MJ_1469"/>
</dbReference>
<dbReference type="GeneID" id="1452373"/>
<dbReference type="KEGG" id="mja:MJ_1469"/>
<dbReference type="eggNOG" id="arCOG09683">
    <property type="taxonomic scope" value="Archaea"/>
</dbReference>
<dbReference type="HOGENOM" id="CLU_197251_1_0_2"/>
<dbReference type="InParanoid" id="Q58864"/>
<dbReference type="OrthoDB" id="66059at2157"/>
<dbReference type="Proteomes" id="UP000000805">
    <property type="component" value="Chromosome"/>
</dbReference>
<dbReference type="GO" id="GO:0009986">
    <property type="term" value="C:cell surface"/>
    <property type="evidence" value="ECO:0007669"/>
    <property type="project" value="UniProtKB-SubCell"/>
</dbReference>
<dbReference type="GO" id="GO:0005576">
    <property type="term" value="C:extracellular region"/>
    <property type="evidence" value="ECO:0007669"/>
    <property type="project" value="UniProtKB-SubCell"/>
</dbReference>
<dbReference type="GO" id="GO:0016020">
    <property type="term" value="C:membrane"/>
    <property type="evidence" value="ECO:0007669"/>
    <property type="project" value="UniProtKB-KW"/>
</dbReference>
<dbReference type="InterPro" id="IPR007166">
    <property type="entry name" value="Class3_signal_pept_motif"/>
</dbReference>
<dbReference type="InterPro" id="IPR026451">
    <property type="entry name" value="ClassIII_w_PIP"/>
</dbReference>
<dbReference type="NCBIfam" id="TIGR04205">
    <property type="entry name" value="classIII_w_PIP"/>
    <property type="match status" value="1"/>
</dbReference>
<dbReference type="Pfam" id="PF04021">
    <property type="entry name" value="Class_IIIsignal"/>
    <property type="match status" value="1"/>
</dbReference>
<organism>
    <name type="scientific">Methanocaldococcus jannaschii (strain ATCC 43067 / DSM 2661 / JAL-1 / JCM 10045 / NBRC 100440)</name>
    <name type="common">Methanococcus jannaschii</name>
    <dbReference type="NCBI Taxonomy" id="243232"/>
    <lineage>
        <taxon>Archaea</taxon>
        <taxon>Methanobacteriati</taxon>
        <taxon>Methanobacteriota</taxon>
        <taxon>Methanomada group</taxon>
        <taxon>Methanococci</taxon>
        <taxon>Methanococcales</taxon>
        <taxon>Methanocaldococcaceae</taxon>
        <taxon>Methanocaldococcus</taxon>
    </lineage>
</organism>
<gene>
    <name type="ordered locus">MJ1469</name>
</gene>
<feature type="propeptide" id="PRO_0000462041" evidence="3">
    <location>
        <begin position="1"/>
        <end position="11"/>
    </location>
</feature>
<feature type="chain" id="PRO_0000218269" description="Probable pilin MJ1469">
    <location>
        <begin position="12"/>
        <end position="75"/>
    </location>
</feature>
<feature type="short sequence motif" description="QXSXEXXXL" evidence="3">
    <location>
        <begin position="12"/>
        <end position="20"/>
    </location>
</feature>
<protein>
    <recommendedName>
        <fullName evidence="3">Probable pilin MJ1469</fullName>
    </recommendedName>
</protein>
<comment type="subcellular location">
    <subcellularLocation>
        <location evidence="1">Secreted</location>
    </subcellularLocation>
    <subcellularLocation>
        <location evidence="1">Cell surface</location>
    </subcellularLocation>
    <subcellularLocation>
        <location evidence="1">Fimbrium</location>
    </subcellularLocation>
</comment>
<comment type="domain">
    <text evidence="2">Contains an amino terminal motif QXSXEXXXL, which is part of a class III signal sequence.</text>
</comment>
<comment type="PTM">
    <text evidence="1">The N-terminus is cleaved by the prepilin peptidase EppA, which recognizes the class III signal sequence.</text>
</comment>
<sequence>MKPKKIISNKAQISLELALLLGALVVAASIVGFYYLKSVTRGTSTAESISKNITLAAKNKALDNIYKVKRALNGQ</sequence>